<dbReference type="EMBL" id="CP000576">
    <property type="protein sequence ID" value="ABO18360.1"/>
    <property type="molecule type" value="Genomic_DNA"/>
</dbReference>
<dbReference type="RefSeq" id="WP_011863652.1">
    <property type="nucleotide sequence ID" value="NC_009091.1"/>
</dbReference>
<dbReference type="SMR" id="A3PF35"/>
<dbReference type="STRING" id="167546.P9301_17371"/>
<dbReference type="KEGG" id="pmg:P9301_17371"/>
<dbReference type="eggNOG" id="COG0094">
    <property type="taxonomic scope" value="Bacteria"/>
</dbReference>
<dbReference type="HOGENOM" id="CLU_061015_2_1_3"/>
<dbReference type="OrthoDB" id="9806626at2"/>
<dbReference type="Proteomes" id="UP000001430">
    <property type="component" value="Chromosome"/>
</dbReference>
<dbReference type="GO" id="GO:1990904">
    <property type="term" value="C:ribonucleoprotein complex"/>
    <property type="evidence" value="ECO:0007669"/>
    <property type="project" value="UniProtKB-KW"/>
</dbReference>
<dbReference type="GO" id="GO:0005840">
    <property type="term" value="C:ribosome"/>
    <property type="evidence" value="ECO:0007669"/>
    <property type="project" value="UniProtKB-KW"/>
</dbReference>
<dbReference type="GO" id="GO:0019843">
    <property type="term" value="F:rRNA binding"/>
    <property type="evidence" value="ECO:0007669"/>
    <property type="project" value="UniProtKB-UniRule"/>
</dbReference>
<dbReference type="GO" id="GO:0003735">
    <property type="term" value="F:structural constituent of ribosome"/>
    <property type="evidence" value="ECO:0007669"/>
    <property type="project" value="InterPro"/>
</dbReference>
<dbReference type="GO" id="GO:0000049">
    <property type="term" value="F:tRNA binding"/>
    <property type="evidence" value="ECO:0007669"/>
    <property type="project" value="UniProtKB-UniRule"/>
</dbReference>
<dbReference type="GO" id="GO:0006412">
    <property type="term" value="P:translation"/>
    <property type="evidence" value="ECO:0007669"/>
    <property type="project" value="UniProtKB-UniRule"/>
</dbReference>
<dbReference type="FunFam" id="3.30.1440.10:FF:000001">
    <property type="entry name" value="50S ribosomal protein L5"/>
    <property type="match status" value="1"/>
</dbReference>
<dbReference type="Gene3D" id="3.30.1440.10">
    <property type="match status" value="1"/>
</dbReference>
<dbReference type="HAMAP" id="MF_01333_B">
    <property type="entry name" value="Ribosomal_uL5_B"/>
    <property type="match status" value="1"/>
</dbReference>
<dbReference type="InterPro" id="IPR002132">
    <property type="entry name" value="Ribosomal_uL5"/>
</dbReference>
<dbReference type="InterPro" id="IPR020930">
    <property type="entry name" value="Ribosomal_uL5_bac-type"/>
</dbReference>
<dbReference type="InterPro" id="IPR031309">
    <property type="entry name" value="Ribosomal_uL5_C"/>
</dbReference>
<dbReference type="InterPro" id="IPR020929">
    <property type="entry name" value="Ribosomal_uL5_CS"/>
</dbReference>
<dbReference type="InterPro" id="IPR022803">
    <property type="entry name" value="Ribosomal_uL5_dom_sf"/>
</dbReference>
<dbReference type="InterPro" id="IPR031310">
    <property type="entry name" value="Ribosomal_uL5_N"/>
</dbReference>
<dbReference type="NCBIfam" id="NF000585">
    <property type="entry name" value="PRK00010.1"/>
    <property type="match status" value="1"/>
</dbReference>
<dbReference type="PANTHER" id="PTHR11994">
    <property type="entry name" value="60S RIBOSOMAL PROTEIN L11-RELATED"/>
    <property type="match status" value="1"/>
</dbReference>
<dbReference type="Pfam" id="PF00281">
    <property type="entry name" value="Ribosomal_L5"/>
    <property type="match status" value="1"/>
</dbReference>
<dbReference type="Pfam" id="PF00673">
    <property type="entry name" value="Ribosomal_L5_C"/>
    <property type="match status" value="1"/>
</dbReference>
<dbReference type="PIRSF" id="PIRSF002161">
    <property type="entry name" value="Ribosomal_L5"/>
    <property type="match status" value="1"/>
</dbReference>
<dbReference type="SUPFAM" id="SSF55282">
    <property type="entry name" value="RL5-like"/>
    <property type="match status" value="1"/>
</dbReference>
<dbReference type="PROSITE" id="PS00358">
    <property type="entry name" value="RIBOSOMAL_L5"/>
    <property type="match status" value="1"/>
</dbReference>
<accession>A3PF35</accession>
<protein>
    <recommendedName>
        <fullName evidence="1">Large ribosomal subunit protein uL5</fullName>
    </recommendedName>
    <alternativeName>
        <fullName evidence="2">50S ribosomal protein L5</fullName>
    </alternativeName>
</protein>
<comment type="function">
    <text evidence="1">This is one of the proteins that bind and probably mediate the attachment of the 5S RNA into the large ribosomal subunit, where it forms part of the central protuberance. In the 70S ribosome it contacts protein S13 of the 30S subunit (bridge B1b), connecting the 2 subunits; this bridge is implicated in subunit movement. Contacts the P site tRNA; the 5S rRNA and some of its associated proteins might help stabilize positioning of ribosome-bound tRNAs.</text>
</comment>
<comment type="subunit">
    <text evidence="1">Part of the 50S ribosomal subunit; part of the 5S rRNA/L5/L18/L25 subcomplex. Contacts the 5S rRNA and the P site tRNA. Forms a bridge to the 30S subunit in the 70S ribosome.</text>
</comment>
<comment type="similarity">
    <text evidence="1">Belongs to the universal ribosomal protein uL5 family.</text>
</comment>
<sequence>MTLKNRYKESIRPKLLKDLGLKNIHQVPKVVKVNVNRGLGEAASNSKALEASLNEMATITGQKALVTRAKKAIAGFKIREGMPIGCTVTLRGDRMYSFLERFINLALPRIRDFRGVNPKSFDGRGNYTVGVKEQLIFPEISFDKIDSIRGMDITIVTSARSDQEGKALLQELGMPFSKN</sequence>
<name>RL5_PROM0</name>
<keyword id="KW-1185">Reference proteome</keyword>
<keyword id="KW-0687">Ribonucleoprotein</keyword>
<keyword id="KW-0689">Ribosomal protein</keyword>
<keyword id="KW-0694">RNA-binding</keyword>
<keyword id="KW-0699">rRNA-binding</keyword>
<keyword id="KW-0820">tRNA-binding</keyword>
<evidence type="ECO:0000255" key="1">
    <source>
        <dbReference type="HAMAP-Rule" id="MF_01333"/>
    </source>
</evidence>
<evidence type="ECO:0000305" key="2"/>
<gene>
    <name evidence="1" type="primary">rplE</name>
    <name evidence="1" type="synonym">rpl5</name>
    <name type="ordered locus">P9301_17371</name>
</gene>
<proteinExistence type="inferred from homology"/>
<feature type="chain" id="PRO_1000052793" description="Large ribosomal subunit protein uL5">
    <location>
        <begin position="1"/>
        <end position="179"/>
    </location>
</feature>
<organism>
    <name type="scientific">Prochlorococcus marinus (strain MIT 9301)</name>
    <dbReference type="NCBI Taxonomy" id="167546"/>
    <lineage>
        <taxon>Bacteria</taxon>
        <taxon>Bacillati</taxon>
        <taxon>Cyanobacteriota</taxon>
        <taxon>Cyanophyceae</taxon>
        <taxon>Synechococcales</taxon>
        <taxon>Prochlorococcaceae</taxon>
        <taxon>Prochlorococcus</taxon>
    </lineage>
</organism>
<reference key="1">
    <citation type="journal article" date="2007" name="PLoS Genet.">
        <title>Patterns and implications of gene gain and loss in the evolution of Prochlorococcus.</title>
        <authorList>
            <person name="Kettler G.C."/>
            <person name="Martiny A.C."/>
            <person name="Huang K."/>
            <person name="Zucker J."/>
            <person name="Coleman M.L."/>
            <person name="Rodrigue S."/>
            <person name="Chen F."/>
            <person name="Lapidus A."/>
            <person name="Ferriera S."/>
            <person name="Johnson J."/>
            <person name="Steglich C."/>
            <person name="Church G.M."/>
            <person name="Richardson P."/>
            <person name="Chisholm S.W."/>
        </authorList>
    </citation>
    <scope>NUCLEOTIDE SEQUENCE [LARGE SCALE GENOMIC DNA]</scope>
    <source>
        <strain>MIT 9301</strain>
    </source>
</reference>